<proteinExistence type="inferred from homology"/>
<protein>
    <recommendedName>
        <fullName evidence="1">Glutamine--tRNA ligase</fullName>
        <ecNumber evidence="1">6.1.1.18</ecNumber>
    </recommendedName>
    <alternativeName>
        <fullName evidence="1">Glutaminyl-tRNA synthetase</fullName>
        <shortName evidence="1">GlnRS</shortName>
    </alternativeName>
</protein>
<accession>B7M5J8</accession>
<organism>
    <name type="scientific">Escherichia coli O8 (strain IAI1)</name>
    <dbReference type="NCBI Taxonomy" id="585034"/>
    <lineage>
        <taxon>Bacteria</taxon>
        <taxon>Pseudomonadati</taxon>
        <taxon>Pseudomonadota</taxon>
        <taxon>Gammaproteobacteria</taxon>
        <taxon>Enterobacterales</taxon>
        <taxon>Enterobacteriaceae</taxon>
        <taxon>Escherichia</taxon>
    </lineage>
</organism>
<evidence type="ECO:0000255" key="1">
    <source>
        <dbReference type="HAMAP-Rule" id="MF_00126"/>
    </source>
</evidence>
<reference key="1">
    <citation type="journal article" date="2009" name="PLoS Genet.">
        <title>Organised genome dynamics in the Escherichia coli species results in highly diverse adaptive paths.</title>
        <authorList>
            <person name="Touchon M."/>
            <person name="Hoede C."/>
            <person name="Tenaillon O."/>
            <person name="Barbe V."/>
            <person name="Baeriswyl S."/>
            <person name="Bidet P."/>
            <person name="Bingen E."/>
            <person name="Bonacorsi S."/>
            <person name="Bouchier C."/>
            <person name="Bouvet O."/>
            <person name="Calteau A."/>
            <person name="Chiapello H."/>
            <person name="Clermont O."/>
            <person name="Cruveiller S."/>
            <person name="Danchin A."/>
            <person name="Diard M."/>
            <person name="Dossat C."/>
            <person name="Karoui M.E."/>
            <person name="Frapy E."/>
            <person name="Garry L."/>
            <person name="Ghigo J.M."/>
            <person name="Gilles A.M."/>
            <person name="Johnson J."/>
            <person name="Le Bouguenec C."/>
            <person name="Lescat M."/>
            <person name="Mangenot S."/>
            <person name="Martinez-Jehanne V."/>
            <person name="Matic I."/>
            <person name="Nassif X."/>
            <person name="Oztas S."/>
            <person name="Petit M.A."/>
            <person name="Pichon C."/>
            <person name="Rouy Z."/>
            <person name="Ruf C.S."/>
            <person name="Schneider D."/>
            <person name="Tourret J."/>
            <person name="Vacherie B."/>
            <person name="Vallenet D."/>
            <person name="Medigue C."/>
            <person name="Rocha E.P.C."/>
            <person name="Denamur E."/>
        </authorList>
    </citation>
    <scope>NUCLEOTIDE SEQUENCE [LARGE SCALE GENOMIC DNA]</scope>
    <source>
        <strain>IAI1</strain>
    </source>
</reference>
<feature type="chain" id="PRO_1000199099" description="Glutamine--tRNA ligase">
    <location>
        <begin position="1"/>
        <end position="554"/>
    </location>
</feature>
<feature type="region of interest" description="Interaction with tRNA" evidence="1">
    <location>
        <begin position="317"/>
        <end position="324"/>
    </location>
</feature>
<feature type="short sequence motif" description="'HIGH' region" evidence="1">
    <location>
        <begin position="34"/>
        <end position="44"/>
    </location>
</feature>
<feature type="short sequence motif" description="'KMSKS' region" evidence="1">
    <location>
        <begin position="268"/>
        <end position="272"/>
    </location>
</feature>
<feature type="binding site" evidence="1">
    <location>
        <begin position="35"/>
        <end position="37"/>
    </location>
    <ligand>
        <name>ATP</name>
        <dbReference type="ChEBI" id="CHEBI:30616"/>
    </ligand>
</feature>
<feature type="binding site" evidence="1">
    <location>
        <begin position="41"/>
        <end position="47"/>
    </location>
    <ligand>
        <name>ATP</name>
        <dbReference type="ChEBI" id="CHEBI:30616"/>
    </ligand>
</feature>
<feature type="binding site" evidence="1">
    <location>
        <position position="67"/>
    </location>
    <ligand>
        <name>L-glutamine</name>
        <dbReference type="ChEBI" id="CHEBI:58359"/>
    </ligand>
</feature>
<feature type="binding site" evidence="1">
    <location>
        <position position="212"/>
    </location>
    <ligand>
        <name>L-glutamine</name>
        <dbReference type="ChEBI" id="CHEBI:58359"/>
    </ligand>
</feature>
<feature type="binding site" evidence="1">
    <location>
        <position position="231"/>
    </location>
    <ligand>
        <name>ATP</name>
        <dbReference type="ChEBI" id="CHEBI:30616"/>
    </ligand>
</feature>
<feature type="binding site" evidence="1">
    <location>
        <begin position="261"/>
        <end position="262"/>
    </location>
    <ligand>
        <name>ATP</name>
        <dbReference type="ChEBI" id="CHEBI:30616"/>
    </ligand>
</feature>
<feature type="binding site" evidence="1">
    <location>
        <begin position="269"/>
        <end position="271"/>
    </location>
    <ligand>
        <name>ATP</name>
        <dbReference type="ChEBI" id="CHEBI:30616"/>
    </ligand>
</feature>
<comment type="catalytic activity">
    <reaction evidence="1">
        <text>tRNA(Gln) + L-glutamine + ATP = L-glutaminyl-tRNA(Gln) + AMP + diphosphate</text>
        <dbReference type="Rhea" id="RHEA:20121"/>
        <dbReference type="Rhea" id="RHEA-COMP:9662"/>
        <dbReference type="Rhea" id="RHEA-COMP:9681"/>
        <dbReference type="ChEBI" id="CHEBI:30616"/>
        <dbReference type="ChEBI" id="CHEBI:33019"/>
        <dbReference type="ChEBI" id="CHEBI:58359"/>
        <dbReference type="ChEBI" id="CHEBI:78442"/>
        <dbReference type="ChEBI" id="CHEBI:78521"/>
        <dbReference type="ChEBI" id="CHEBI:456215"/>
        <dbReference type="EC" id="6.1.1.18"/>
    </reaction>
</comment>
<comment type="subunit">
    <text evidence="1">Monomer.</text>
</comment>
<comment type="subcellular location">
    <subcellularLocation>
        <location evidence="1">Cytoplasm</location>
    </subcellularLocation>
</comment>
<comment type="similarity">
    <text evidence="1">Belongs to the class-I aminoacyl-tRNA synthetase family.</text>
</comment>
<sequence>MSEAEARPTNFIRQIIDEDLASGKHTTVHTRFPPEPNGYLHIGHAKSICLNFGIAQDYKGQCNLRFDDTNPVKEDIEYVESIKNDVEWLGFHWSGNVRYSSDYFDQLHAYAIELINKGLAYVDELTPEQIREYRGTLTQPGKNSPYRDRSVEENLALFEKMRAGGFEEGKACLRAKIDMASPFIVMRDPVLYRIKFAEHHQTGNKWCIYPMYDFTHCISDALEGITHSLCTLEFQDNRRLYDWVLDNITIPVHPRQYEFSRLNLEYTVMSKRKLNLLVTDKHVEGWDDPRMPTISGLRRRGYTAASIREFCKRIGVTKQDNTIEMASLESCIREDLNENAPRAMAVIDPVKLVIENYQGEGEMVTMPNHPNKPEMGSRQVPFSGEIWIDRADFREEANKQYKRLVLGKEVRLRNAYVIKAERVEKDAEGNITTIFCTYDADTLSKDPADGRKVKGVIHWVSAAHALPVEIRLYDRLFSVPNPGAADDFLSVINPESLVIKQGFAEPSLKDAVAGKAFQFEREGYFCLDSRHSTAEKPVFNRTVGLRDTWAKVGE</sequence>
<gene>
    <name evidence="1" type="primary">glnS</name>
    <name type="ordered locus">ECIAI1_0658</name>
</gene>
<dbReference type="EC" id="6.1.1.18" evidence="1"/>
<dbReference type="EMBL" id="CU928160">
    <property type="protein sequence ID" value="CAQ97526.1"/>
    <property type="molecule type" value="Genomic_DNA"/>
</dbReference>
<dbReference type="RefSeq" id="WP_001287154.1">
    <property type="nucleotide sequence ID" value="NC_011741.1"/>
</dbReference>
<dbReference type="SMR" id="B7M5J8"/>
<dbReference type="GeneID" id="93776805"/>
<dbReference type="KEGG" id="ecr:ECIAI1_0658"/>
<dbReference type="HOGENOM" id="CLU_001882_2_3_6"/>
<dbReference type="GO" id="GO:0005829">
    <property type="term" value="C:cytosol"/>
    <property type="evidence" value="ECO:0007669"/>
    <property type="project" value="TreeGrafter"/>
</dbReference>
<dbReference type="GO" id="GO:0005524">
    <property type="term" value="F:ATP binding"/>
    <property type="evidence" value="ECO:0007669"/>
    <property type="project" value="UniProtKB-UniRule"/>
</dbReference>
<dbReference type="GO" id="GO:0004819">
    <property type="term" value="F:glutamine-tRNA ligase activity"/>
    <property type="evidence" value="ECO:0007669"/>
    <property type="project" value="UniProtKB-UniRule"/>
</dbReference>
<dbReference type="GO" id="GO:0006425">
    <property type="term" value="P:glutaminyl-tRNA aminoacylation"/>
    <property type="evidence" value="ECO:0007669"/>
    <property type="project" value="InterPro"/>
</dbReference>
<dbReference type="GO" id="GO:0006424">
    <property type="term" value="P:glutamyl-tRNA aminoacylation"/>
    <property type="evidence" value="ECO:0007669"/>
    <property type="project" value="UniProtKB-UniRule"/>
</dbReference>
<dbReference type="CDD" id="cd00807">
    <property type="entry name" value="GlnRS_core"/>
    <property type="match status" value="1"/>
</dbReference>
<dbReference type="FunFam" id="1.10.1160.10:FF:000001">
    <property type="entry name" value="Glutamine--tRNA ligase"/>
    <property type="match status" value="1"/>
</dbReference>
<dbReference type="FunFam" id="2.40.240.10:FF:000001">
    <property type="entry name" value="Glutamine--tRNA ligase"/>
    <property type="match status" value="1"/>
</dbReference>
<dbReference type="FunFam" id="2.40.240.10:FF:000003">
    <property type="entry name" value="Glutamine--tRNA ligase"/>
    <property type="match status" value="1"/>
</dbReference>
<dbReference type="FunFam" id="3.90.800.10:FF:000001">
    <property type="entry name" value="Glutamine--tRNA ligase"/>
    <property type="match status" value="1"/>
</dbReference>
<dbReference type="FunFam" id="3.40.50.620:FF:000037">
    <property type="entry name" value="Glutamine--tRNA ligase cytoplasmic"/>
    <property type="match status" value="1"/>
</dbReference>
<dbReference type="Gene3D" id="1.10.1160.10">
    <property type="entry name" value="Glutamyl-trna Synthetase, Domain 2"/>
    <property type="match status" value="1"/>
</dbReference>
<dbReference type="Gene3D" id="3.90.800.10">
    <property type="entry name" value="Glutamyl-tRNA Synthetase, Domain 3"/>
    <property type="match status" value="1"/>
</dbReference>
<dbReference type="Gene3D" id="3.40.50.620">
    <property type="entry name" value="HUPs"/>
    <property type="match status" value="1"/>
</dbReference>
<dbReference type="Gene3D" id="2.40.240.10">
    <property type="entry name" value="Ribosomal Protein L25, Chain P"/>
    <property type="match status" value="2"/>
</dbReference>
<dbReference type="HAMAP" id="MF_00126">
    <property type="entry name" value="Gln_tRNA_synth"/>
    <property type="match status" value="1"/>
</dbReference>
<dbReference type="InterPro" id="IPR001412">
    <property type="entry name" value="aa-tRNA-synth_I_CS"/>
</dbReference>
<dbReference type="InterPro" id="IPR004514">
    <property type="entry name" value="Gln-tRNA-synth"/>
</dbReference>
<dbReference type="InterPro" id="IPR050132">
    <property type="entry name" value="Gln/Glu-tRNA_Ligase"/>
</dbReference>
<dbReference type="InterPro" id="IPR022861">
    <property type="entry name" value="Gln_tRNA_ligase_bac"/>
</dbReference>
<dbReference type="InterPro" id="IPR000924">
    <property type="entry name" value="Glu/Gln-tRNA-synth"/>
</dbReference>
<dbReference type="InterPro" id="IPR020058">
    <property type="entry name" value="Glu/Gln-tRNA-synth_Ib_cat-dom"/>
</dbReference>
<dbReference type="InterPro" id="IPR020059">
    <property type="entry name" value="Glu/Gln-tRNA-synth_Ib_codon-bd"/>
</dbReference>
<dbReference type="InterPro" id="IPR020061">
    <property type="entry name" value="Glu_tRNA_lig_a-bdl"/>
</dbReference>
<dbReference type="InterPro" id="IPR020056">
    <property type="entry name" value="Rbsml_bL25/Gln-tRNA_synth_N"/>
</dbReference>
<dbReference type="InterPro" id="IPR011035">
    <property type="entry name" value="Ribosomal_bL25/Gln-tRNA_synth"/>
</dbReference>
<dbReference type="InterPro" id="IPR014729">
    <property type="entry name" value="Rossmann-like_a/b/a_fold"/>
</dbReference>
<dbReference type="InterPro" id="IPR049437">
    <property type="entry name" value="tRNA-synt_1c_C2"/>
</dbReference>
<dbReference type="NCBIfam" id="TIGR00440">
    <property type="entry name" value="glnS"/>
    <property type="match status" value="1"/>
</dbReference>
<dbReference type="NCBIfam" id="NF011291">
    <property type="entry name" value="PRK14703.1"/>
    <property type="match status" value="1"/>
</dbReference>
<dbReference type="PANTHER" id="PTHR43097:SF5">
    <property type="entry name" value="GLUTAMATE--TRNA LIGASE"/>
    <property type="match status" value="1"/>
</dbReference>
<dbReference type="PANTHER" id="PTHR43097">
    <property type="entry name" value="GLUTAMINE-TRNA LIGASE"/>
    <property type="match status" value="1"/>
</dbReference>
<dbReference type="Pfam" id="PF00749">
    <property type="entry name" value="tRNA-synt_1c"/>
    <property type="match status" value="1"/>
</dbReference>
<dbReference type="Pfam" id="PF03950">
    <property type="entry name" value="tRNA-synt_1c_C"/>
    <property type="match status" value="1"/>
</dbReference>
<dbReference type="Pfam" id="PF20974">
    <property type="entry name" value="tRNA-synt_1c_C2"/>
    <property type="match status" value="1"/>
</dbReference>
<dbReference type="PRINTS" id="PR00987">
    <property type="entry name" value="TRNASYNTHGLU"/>
</dbReference>
<dbReference type="SUPFAM" id="SSF52374">
    <property type="entry name" value="Nucleotidylyl transferase"/>
    <property type="match status" value="1"/>
</dbReference>
<dbReference type="SUPFAM" id="SSF50715">
    <property type="entry name" value="Ribosomal protein L25-like"/>
    <property type="match status" value="1"/>
</dbReference>
<dbReference type="PROSITE" id="PS00178">
    <property type="entry name" value="AA_TRNA_LIGASE_I"/>
    <property type="match status" value="1"/>
</dbReference>
<name>SYQ_ECO8A</name>
<keyword id="KW-0030">Aminoacyl-tRNA synthetase</keyword>
<keyword id="KW-0067">ATP-binding</keyword>
<keyword id="KW-0963">Cytoplasm</keyword>
<keyword id="KW-0436">Ligase</keyword>
<keyword id="KW-0547">Nucleotide-binding</keyword>
<keyword id="KW-0648">Protein biosynthesis</keyword>